<comment type="function">
    <text evidence="1">Phosphorylation of dTMP to form dTDP in both de novo and salvage pathways of dTTP synthesis.</text>
</comment>
<comment type="catalytic activity">
    <reaction evidence="1">
        <text>dTMP + ATP = dTDP + ADP</text>
        <dbReference type="Rhea" id="RHEA:13517"/>
        <dbReference type="ChEBI" id="CHEBI:30616"/>
        <dbReference type="ChEBI" id="CHEBI:58369"/>
        <dbReference type="ChEBI" id="CHEBI:63528"/>
        <dbReference type="ChEBI" id="CHEBI:456216"/>
        <dbReference type="EC" id="2.7.4.9"/>
    </reaction>
</comment>
<comment type="similarity">
    <text evidence="1">Belongs to the thymidylate kinase family.</text>
</comment>
<evidence type="ECO:0000255" key="1">
    <source>
        <dbReference type="HAMAP-Rule" id="MF_00165"/>
    </source>
</evidence>
<gene>
    <name evidence="1" type="primary">tmk</name>
    <name type="ordered locus">CJE0857</name>
</gene>
<keyword id="KW-0067">ATP-binding</keyword>
<keyword id="KW-0418">Kinase</keyword>
<keyword id="KW-0545">Nucleotide biosynthesis</keyword>
<keyword id="KW-0547">Nucleotide-binding</keyword>
<keyword id="KW-0808">Transferase</keyword>
<name>KTHY_CAMJR</name>
<accession>Q5HV26</accession>
<protein>
    <recommendedName>
        <fullName evidence="1">Thymidylate kinase</fullName>
        <ecNumber evidence="1">2.7.4.9</ecNumber>
    </recommendedName>
    <alternativeName>
        <fullName evidence="1">dTMP kinase</fullName>
    </alternativeName>
</protein>
<reference key="1">
    <citation type="journal article" date="2005" name="PLoS Biol.">
        <title>Major structural differences and novel potential virulence mechanisms from the genomes of multiple Campylobacter species.</title>
        <authorList>
            <person name="Fouts D.E."/>
            <person name="Mongodin E.F."/>
            <person name="Mandrell R.E."/>
            <person name="Miller W.G."/>
            <person name="Rasko D.A."/>
            <person name="Ravel J."/>
            <person name="Brinkac L.M."/>
            <person name="DeBoy R.T."/>
            <person name="Parker C.T."/>
            <person name="Daugherty S.C."/>
            <person name="Dodson R.J."/>
            <person name="Durkin A.S."/>
            <person name="Madupu R."/>
            <person name="Sullivan S.A."/>
            <person name="Shetty J.U."/>
            <person name="Ayodeji M.A."/>
            <person name="Shvartsbeyn A."/>
            <person name="Schatz M.C."/>
            <person name="Badger J.H."/>
            <person name="Fraser C.M."/>
            <person name="Nelson K.E."/>
        </authorList>
    </citation>
    <scope>NUCLEOTIDE SEQUENCE [LARGE SCALE GENOMIC DNA]</scope>
    <source>
        <strain>RM1221</strain>
    </source>
</reference>
<sequence>MYVVFEGIDCVGKSTQISLLKEIYKDAIFTLEPGGTELGKHLREILLNKTHPINKRAELLLFLADRAQHFEEILKTNQNKLIISDRSFISGMAYAKDFENDLLFALNSFALENFFPQKIIFLKGDANLIQERLSQKELDSIEKRGIEYFLSVQDKLEKVLHFLKEKISVEILTLDAKESKEKLHQQIKEFLQ</sequence>
<organism>
    <name type="scientific">Campylobacter jejuni (strain RM1221)</name>
    <dbReference type="NCBI Taxonomy" id="195099"/>
    <lineage>
        <taxon>Bacteria</taxon>
        <taxon>Pseudomonadati</taxon>
        <taxon>Campylobacterota</taxon>
        <taxon>Epsilonproteobacteria</taxon>
        <taxon>Campylobacterales</taxon>
        <taxon>Campylobacteraceae</taxon>
        <taxon>Campylobacter</taxon>
    </lineage>
</organism>
<proteinExistence type="inferred from homology"/>
<feature type="chain" id="PRO_0000155255" description="Thymidylate kinase">
    <location>
        <begin position="1"/>
        <end position="192"/>
    </location>
</feature>
<feature type="binding site" evidence="1">
    <location>
        <begin position="7"/>
        <end position="14"/>
    </location>
    <ligand>
        <name>ATP</name>
        <dbReference type="ChEBI" id="CHEBI:30616"/>
    </ligand>
</feature>
<dbReference type="EC" id="2.7.4.9" evidence="1"/>
<dbReference type="EMBL" id="CP000025">
    <property type="protein sequence ID" value="AAW35194.1"/>
    <property type="molecule type" value="Genomic_DNA"/>
</dbReference>
<dbReference type="RefSeq" id="WP_002852526.1">
    <property type="nucleotide sequence ID" value="NC_003912.7"/>
</dbReference>
<dbReference type="SMR" id="Q5HV26"/>
<dbReference type="KEGG" id="cjr:CJE0857"/>
<dbReference type="HOGENOM" id="CLU_049131_0_0_7"/>
<dbReference type="GO" id="GO:0005829">
    <property type="term" value="C:cytosol"/>
    <property type="evidence" value="ECO:0007669"/>
    <property type="project" value="TreeGrafter"/>
</dbReference>
<dbReference type="GO" id="GO:0005524">
    <property type="term" value="F:ATP binding"/>
    <property type="evidence" value="ECO:0007669"/>
    <property type="project" value="UniProtKB-UniRule"/>
</dbReference>
<dbReference type="GO" id="GO:0004798">
    <property type="term" value="F:dTMP kinase activity"/>
    <property type="evidence" value="ECO:0007669"/>
    <property type="project" value="UniProtKB-UniRule"/>
</dbReference>
<dbReference type="GO" id="GO:0006233">
    <property type="term" value="P:dTDP biosynthetic process"/>
    <property type="evidence" value="ECO:0007669"/>
    <property type="project" value="InterPro"/>
</dbReference>
<dbReference type="GO" id="GO:0006235">
    <property type="term" value="P:dTTP biosynthetic process"/>
    <property type="evidence" value="ECO:0007669"/>
    <property type="project" value="UniProtKB-UniRule"/>
</dbReference>
<dbReference type="GO" id="GO:0006227">
    <property type="term" value="P:dUDP biosynthetic process"/>
    <property type="evidence" value="ECO:0007669"/>
    <property type="project" value="TreeGrafter"/>
</dbReference>
<dbReference type="CDD" id="cd01672">
    <property type="entry name" value="TMPK"/>
    <property type="match status" value="1"/>
</dbReference>
<dbReference type="Gene3D" id="3.40.50.300">
    <property type="entry name" value="P-loop containing nucleotide triphosphate hydrolases"/>
    <property type="match status" value="1"/>
</dbReference>
<dbReference type="HAMAP" id="MF_00165">
    <property type="entry name" value="Thymidylate_kinase"/>
    <property type="match status" value="1"/>
</dbReference>
<dbReference type="InterPro" id="IPR027417">
    <property type="entry name" value="P-loop_NTPase"/>
</dbReference>
<dbReference type="InterPro" id="IPR039430">
    <property type="entry name" value="Thymidylate_kin-like_dom"/>
</dbReference>
<dbReference type="InterPro" id="IPR018094">
    <property type="entry name" value="Thymidylate_kinase"/>
</dbReference>
<dbReference type="NCBIfam" id="TIGR00041">
    <property type="entry name" value="DTMP_kinase"/>
    <property type="match status" value="1"/>
</dbReference>
<dbReference type="PANTHER" id="PTHR10344">
    <property type="entry name" value="THYMIDYLATE KINASE"/>
    <property type="match status" value="1"/>
</dbReference>
<dbReference type="PANTHER" id="PTHR10344:SF4">
    <property type="entry name" value="UMP-CMP KINASE 2, MITOCHONDRIAL"/>
    <property type="match status" value="1"/>
</dbReference>
<dbReference type="Pfam" id="PF02223">
    <property type="entry name" value="Thymidylate_kin"/>
    <property type="match status" value="1"/>
</dbReference>
<dbReference type="SUPFAM" id="SSF52540">
    <property type="entry name" value="P-loop containing nucleoside triphosphate hydrolases"/>
    <property type="match status" value="1"/>
</dbReference>
<dbReference type="PROSITE" id="PS01331">
    <property type="entry name" value="THYMIDYLATE_KINASE"/>
    <property type="match status" value="1"/>
</dbReference>